<reference key="1">
    <citation type="journal article" date="2006" name="BMC Genomics">
        <title>Complete genome sequence of Shigella flexneri 5b and comparison with Shigella flexneri 2a.</title>
        <authorList>
            <person name="Nie H."/>
            <person name="Yang F."/>
            <person name="Zhang X."/>
            <person name="Yang J."/>
            <person name="Chen L."/>
            <person name="Wang J."/>
            <person name="Xiong Z."/>
            <person name="Peng J."/>
            <person name="Sun L."/>
            <person name="Dong J."/>
            <person name="Xue Y."/>
            <person name="Xu X."/>
            <person name="Chen S."/>
            <person name="Yao Z."/>
            <person name="Shen Y."/>
            <person name="Jin Q."/>
        </authorList>
    </citation>
    <scope>NUCLEOTIDE SEQUENCE [LARGE SCALE GENOMIC DNA]</scope>
    <source>
        <strain>8401</strain>
    </source>
</reference>
<organism>
    <name type="scientific">Shigella flexneri serotype 5b (strain 8401)</name>
    <dbReference type="NCBI Taxonomy" id="373384"/>
    <lineage>
        <taxon>Bacteria</taxon>
        <taxon>Pseudomonadati</taxon>
        <taxon>Pseudomonadota</taxon>
        <taxon>Gammaproteobacteria</taxon>
        <taxon>Enterobacterales</taxon>
        <taxon>Enterobacteriaceae</taxon>
        <taxon>Shigella</taxon>
    </lineage>
</organism>
<accession>Q0T7R6</accession>
<keyword id="KW-0028">Amino-acid biosynthesis</keyword>
<keyword id="KW-0963">Cytoplasm</keyword>
<keyword id="KW-0521">NADP</keyword>
<keyword id="KW-0560">Oxidoreductase</keyword>
<keyword id="KW-0641">Proline biosynthesis</keyword>
<feature type="chain" id="PRO_1000049992" description="Gamma-glutamyl phosphate reductase">
    <location>
        <begin position="1"/>
        <end position="417"/>
    </location>
</feature>
<sequence length="417" mass="44632">MLEQMGIAAKQASYKLAQLSSREKNRVLEKIADELEAQSEIILNANAQDVADARANGLSEAMLDRLALTPARLKGIADDVRQVCNLADPVGQVIDGGVLDSGLRLERRRVPLGVIGVIYEARPNVTVDVASLCLKTGNAVILRGGKETCRTNAATVAVIQDALKSCGLPAGAVQAIDNPDRALVSEMLRMDKYIDMLIPRGGAGLHKLCREQSTIPVITGGIGVCHIYVDESAEIAEALKVIVNAKTQRPSTCNTVETLLVNKNIADSFLPALSKQMAESGVTLHADAAALTQLQAGPAKVVAVKAEEYDDEFLSLDLNVKIVSDLDDAIAHIREHGTQHSDAILTRDMRNAQRFVNEVDSSAVYVNASTRFTDGGQFGLGAEVAVSTQKLHARGPMGLEALTTYKWIGIGDYTIRA</sequence>
<comment type="function">
    <text evidence="1">Catalyzes the NADPH-dependent reduction of L-glutamate 5-phosphate into L-glutamate 5-semialdehyde and phosphate. The product spontaneously undergoes cyclization to form 1-pyrroline-5-carboxylate.</text>
</comment>
<comment type="catalytic activity">
    <reaction evidence="1">
        <text>L-glutamate 5-semialdehyde + phosphate + NADP(+) = L-glutamyl 5-phosphate + NADPH + H(+)</text>
        <dbReference type="Rhea" id="RHEA:19541"/>
        <dbReference type="ChEBI" id="CHEBI:15378"/>
        <dbReference type="ChEBI" id="CHEBI:43474"/>
        <dbReference type="ChEBI" id="CHEBI:57783"/>
        <dbReference type="ChEBI" id="CHEBI:58066"/>
        <dbReference type="ChEBI" id="CHEBI:58274"/>
        <dbReference type="ChEBI" id="CHEBI:58349"/>
        <dbReference type="EC" id="1.2.1.41"/>
    </reaction>
</comment>
<comment type="pathway">
    <text evidence="1">Amino-acid biosynthesis; L-proline biosynthesis; L-glutamate 5-semialdehyde from L-glutamate: step 2/2.</text>
</comment>
<comment type="subcellular location">
    <subcellularLocation>
        <location evidence="1">Cytoplasm</location>
    </subcellularLocation>
</comment>
<comment type="similarity">
    <text evidence="1">Belongs to the gamma-glutamyl phosphate reductase family.</text>
</comment>
<proteinExistence type="inferred from homology"/>
<name>PROA_SHIF8</name>
<gene>
    <name evidence="1" type="primary">proA</name>
    <name type="ordered locus">SFV_0285</name>
</gene>
<protein>
    <recommendedName>
        <fullName evidence="1">Gamma-glutamyl phosphate reductase</fullName>
        <shortName evidence="1">GPR</shortName>
        <ecNumber evidence="1">1.2.1.41</ecNumber>
    </recommendedName>
    <alternativeName>
        <fullName evidence="1">Glutamate-5-semialdehyde dehydrogenase</fullName>
    </alternativeName>
    <alternativeName>
        <fullName evidence="1">Glutamyl-gamma-semialdehyde dehydrogenase</fullName>
        <shortName evidence="1">GSA dehydrogenase</shortName>
    </alternativeName>
</protein>
<dbReference type="EC" id="1.2.1.41" evidence="1"/>
<dbReference type="EMBL" id="CP000266">
    <property type="protein sequence ID" value="ABF02560.1"/>
    <property type="molecule type" value="Genomic_DNA"/>
</dbReference>
<dbReference type="RefSeq" id="WP_000893267.1">
    <property type="nucleotide sequence ID" value="NC_008258.1"/>
</dbReference>
<dbReference type="SMR" id="Q0T7R6"/>
<dbReference type="KEGG" id="sfv:SFV_0285"/>
<dbReference type="HOGENOM" id="CLU_030231_0_0_6"/>
<dbReference type="UniPathway" id="UPA00098">
    <property type="reaction ID" value="UER00360"/>
</dbReference>
<dbReference type="Proteomes" id="UP000000659">
    <property type="component" value="Chromosome"/>
</dbReference>
<dbReference type="GO" id="GO:0005737">
    <property type="term" value="C:cytoplasm"/>
    <property type="evidence" value="ECO:0007669"/>
    <property type="project" value="UniProtKB-SubCell"/>
</dbReference>
<dbReference type="GO" id="GO:0004350">
    <property type="term" value="F:glutamate-5-semialdehyde dehydrogenase activity"/>
    <property type="evidence" value="ECO:0007669"/>
    <property type="project" value="UniProtKB-UniRule"/>
</dbReference>
<dbReference type="GO" id="GO:0050661">
    <property type="term" value="F:NADP binding"/>
    <property type="evidence" value="ECO:0007669"/>
    <property type="project" value="InterPro"/>
</dbReference>
<dbReference type="GO" id="GO:0055129">
    <property type="term" value="P:L-proline biosynthetic process"/>
    <property type="evidence" value="ECO:0007669"/>
    <property type="project" value="UniProtKB-UniRule"/>
</dbReference>
<dbReference type="CDD" id="cd07079">
    <property type="entry name" value="ALDH_F18-19_ProA-GPR"/>
    <property type="match status" value="1"/>
</dbReference>
<dbReference type="FunFam" id="3.40.309.10:FF:000006">
    <property type="entry name" value="Gamma-glutamyl phosphate reductase"/>
    <property type="match status" value="1"/>
</dbReference>
<dbReference type="Gene3D" id="3.40.605.10">
    <property type="entry name" value="Aldehyde Dehydrogenase, Chain A, domain 1"/>
    <property type="match status" value="1"/>
</dbReference>
<dbReference type="Gene3D" id="3.40.309.10">
    <property type="entry name" value="Aldehyde Dehydrogenase, Chain A, domain 2"/>
    <property type="match status" value="1"/>
</dbReference>
<dbReference type="HAMAP" id="MF_00412">
    <property type="entry name" value="ProA"/>
    <property type="match status" value="1"/>
</dbReference>
<dbReference type="InterPro" id="IPR016161">
    <property type="entry name" value="Ald_DH/histidinol_DH"/>
</dbReference>
<dbReference type="InterPro" id="IPR016163">
    <property type="entry name" value="Ald_DH_C"/>
</dbReference>
<dbReference type="InterPro" id="IPR016162">
    <property type="entry name" value="Ald_DH_N"/>
</dbReference>
<dbReference type="InterPro" id="IPR015590">
    <property type="entry name" value="Aldehyde_DH_dom"/>
</dbReference>
<dbReference type="InterPro" id="IPR020593">
    <property type="entry name" value="G-glutamylP_reductase_CS"/>
</dbReference>
<dbReference type="InterPro" id="IPR012134">
    <property type="entry name" value="Glu-5-SA_DH"/>
</dbReference>
<dbReference type="InterPro" id="IPR000965">
    <property type="entry name" value="GPR_dom"/>
</dbReference>
<dbReference type="NCBIfam" id="NF001221">
    <property type="entry name" value="PRK00197.1"/>
    <property type="match status" value="1"/>
</dbReference>
<dbReference type="NCBIfam" id="TIGR00407">
    <property type="entry name" value="proA"/>
    <property type="match status" value="1"/>
</dbReference>
<dbReference type="PANTHER" id="PTHR11063:SF8">
    <property type="entry name" value="DELTA-1-PYRROLINE-5-CARBOXYLATE SYNTHASE"/>
    <property type="match status" value="1"/>
</dbReference>
<dbReference type="PANTHER" id="PTHR11063">
    <property type="entry name" value="GLUTAMATE SEMIALDEHYDE DEHYDROGENASE"/>
    <property type="match status" value="1"/>
</dbReference>
<dbReference type="Pfam" id="PF00171">
    <property type="entry name" value="Aldedh"/>
    <property type="match status" value="1"/>
</dbReference>
<dbReference type="PIRSF" id="PIRSF000151">
    <property type="entry name" value="GPR"/>
    <property type="match status" value="1"/>
</dbReference>
<dbReference type="SUPFAM" id="SSF53720">
    <property type="entry name" value="ALDH-like"/>
    <property type="match status" value="1"/>
</dbReference>
<dbReference type="PROSITE" id="PS01223">
    <property type="entry name" value="PROA"/>
    <property type="match status" value="1"/>
</dbReference>
<evidence type="ECO:0000255" key="1">
    <source>
        <dbReference type="HAMAP-Rule" id="MF_00412"/>
    </source>
</evidence>